<comment type="function">
    <text evidence="1">One of the early assembly proteins it binds 23S rRNA. One of the proteins that surrounds the polypeptide exit tunnel on the outside of the ribosome. Forms the main docking site for trigger factor binding to the ribosome.</text>
</comment>
<comment type="subunit">
    <text evidence="1">Part of the 50S ribosomal subunit. Contacts protein L29, and trigger factor when it is bound to the ribosome.</text>
</comment>
<comment type="similarity">
    <text evidence="1">Belongs to the universal ribosomal protein uL23 family.</text>
</comment>
<name>RL23_LACP7</name>
<accession>A9KJJ2</accession>
<reference key="1">
    <citation type="submission" date="2007-11" db="EMBL/GenBank/DDBJ databases">
        <title>Complete genome sequence of Clostridium phytofermentans ISDg.</title>
        <authorList>
            <person name="Leschine S.B."/>
            <person name="Warnick T.A."/>
            <person name="Blanchard J.L."/>
            <person name="Schnell D.J."/>
            <person name="Petit E.L."/>
            <person name="LaTouf W.G."/>
            <person name="Copeland A."/>
            <person name="Lucas S."/>
            <person name="Lapidus A."/>
            <person name="Barry K."/>
            <person name="Glavina del Rio T."/>
            <person name="Dalin E."/>
            <person name="Tice H."/>
            <person name="Pitluck S."/>
            <person name="Kiss H."/>
            <person name="Brettin T."/>
            <person name="Bruce D."/>
            <person name="Detter J.C."/>
            <person name="Han C."/>
            <person name="Kuske C."/>
            <person name="Schmutz J."/>
            <person name="Larimer F."/>
            <person name="Land M."/>
            <person name="Hauser L."/>
            <person name="Kyrpides N."/>
            <person name="Kim E.A."/>
            <person name="Richardson P."/>
        </authorList>
    </citation>
    <scope>NUCLEOTIDE SEQUENCE [LARGE SCALE GENOMIC DNA]</scope>
    <source>
        <strain>ATCC 700394 / DSM 18823 / ISDg</strain>
    </source>
</reference>
<feature type="chain" id="PRO_1000184080" description="Large ribosomal subunit protein uL23">
    <location>
        <begin position="1"/>
        <end position="99"/>
    </location>
</feature>
<protein>
    <recommendedName>
        <fullName evidence="1">Large ribosomal subunit protein uL23</fullName>
    </recommendedName>
    <alternativeName>
        <fullName evidence="2">50S ribosomal protein L23</fullName>
    </alternativeName>
</protein>
<proteinExistence type="inferred from homology"/>
<sequence length="99" mass="10977">MANLKYYDVILKPIVTEKSMNSMSEKKYSFSVHPEATKTQVKEAVEKMFAGTKVASVNTMNLEGKNRRRGNTSGKTSKTKKAIVQLTADSAEIEIFTGL</sequence>
<dbReference type="EMBL" id="CP000885">
    <property type="protein sequence ID" value="ABX44012.1"/>
    <property type="molecule type" value="Genomic_DNA"/>
</dbReference>
<dbReference type="RefSeq" id="WP_012201660.1">
    <property type="nucleotide sequence ID" value="NC_010001.1"/>
</dbReference>
<dbReference type="SMR" id="A9KJJ2"/>
<dbReference type="STRING" id="357809.Cphy_3665"/>
<dbReference type="KEGG" id="cpy:Cphy_3665"/>
<dbReference type="eggNOG" id="COG0089">
    <property type="taxonomic scope" value="Bacteria"/>
</dbReference>
<dbReference type="HOGENOM" id="CLU_037562_3_2_9"/>
<dbReference type="OrthoDB" id="9793353at2"/>
<dbReference type="Proteomes" id="UP000000370">
    <property type="component" value="Chromosome"/>
</dbReference>
<dbReference type="GO" id="GO:1990904">
    <property type="term" value="C:ribonucleoprotein complex"/>
    <property type="evidence" value="ECO:0007669"/>
    <property type="project" value="UniProtKB-KW"/>
</dbReference>
<dbReference type="GO" id="GO:0005840">
    <property type="term" value="C:ribosome"/>
    <property type="evidence" value="ECO:0007669"/>
    <property type="project" value="UniProtKB-KW"/>
</dbReference>
<dbReference type="GO" id="GO:0019843">
    <property type="term" value="F:rRNA binding"/>
    <property type="evidence" value="ECO:0007669"/>
    <property type="project" value="UniProtKB-UniRule"/>
</dbReference>
<dbReference type="GO" id="GO:0003735">
    <property type="term" value="F:structural constituent of ribosome"/>
    <property type="evidence" value="ECO:0007669"/>
    <property type="project" value="InterPro"/>
</dbReference>
<dbReference type="GO" id="GO:0006412">
    <property type="term" value="P:translation"/>
    <property type="evidence" value="ECO:0007669"/>
    <property type="project" value="UniProtKB-UniRule"/>
</dbReference>
<dbReference type="FunFam" id="3.30.70.330:FF:000001">
    <property type="entry name" value="50S ribosomal protein L23"/>
    <property type="match status" value="1"/>
</dbReference>
<dbReference type="Gene3D" id="3.30.70.330">
    <property type="match status" value="1"/>
</dbReference>
<dbReference type="HAMAP" id="MF_01369_B">
    <property type="entry name" value="Ribosomal_uL23_B"/>
    <property type="match status" value="1"/>
</dbReference>
<dbReference type="InterPro" id="IPR012677">
    <property type="entry name" value="Nucleotide-bd_a/b_plait_sf"/>
</dbReference>
<dbReference type="InterPro" id="IPR013025">
    <property type="entry name" value="Ribosomal_uL23-like"/>
</dbReference>
<dbReference type="InterPro" id="IPR012678">
    <property type="entry name" value="Ribosomal_uL23/eL15/eS24_sf"/>
</dbReference>
<dbReference type="NCBIfam" id="NF004363">
    <property type="entry name" value="PRK05738.2-4"/>
    <property type="match status" value="1"/>
</dbReference>
<dbReference type="PANTHER" id="PTHR11620">
    <property type="entry name" value="60S RIBOSOMAL PROTEIN L23A"/>
    <property type="match status" value="1"/>
</dbReference>
<dbReference type="Pfam" id="PF00276">
    <property type="entry name" value="Ribosomal_L23"/>
    <property type="match status" value="1"/>
</dbReference>
<dbReference type="SUPFAM" id="SSF54189">
    <property type="entry name" value="Ribosomal proteins S24e, L23 and L15e"/>
    <property type="match status" value="1"/>
</dbReference>
<evidence type="ECO:0000255" key="1">
    <source>
        <dbReference type="HAMAP-Rule" id="MF_01369"/>
    </source>
</evidence>
<evidence type="ECO:0000305" key="2"/>
<organism>
    <name type="scientific">Lachnoclostridium phytofermentans (strain ATCC 700394 / DSM 18823 / ISDg)</name>
    <name type="common">Clostridium phytofermentans</name>
    <dbReference type="NCBI Taxonomy" id="357809"/>
    <lineage>
        <taxon>Bacteria</taxon>
        <taxon>Bacillati</taxon>
        <taxon>Bacillota</taxon>
        <taxon>Clostridia</taxon>
        <taxon>Lachnospirales</taxon>
        <taxon>Lachnospiraceae</taxon>
    </lineage>
</organism>
<gene>
    <name evidence="1" type="primary">rplW</name>
    <name type="ordered locus">Cphy_3665</name>
</gene>
<keyword id="KW-1185">Reference proteome</keyword>
<keyword id="KW-0687">Ribonucleoprotein</keyword>
<keyword id="KW-0689">Ribosomal protein</keyword>
<keyword id="KW-0694">RNA-binding</keyword>
<keyword id="KW-0699">rRNA-binding</keyword>